<protein>
    <recommendedName>
        <fullName>Putative potassium channel regulatory protein sup-10</fullName>
    </recommendedName>
    <alternativeName>
        <fullName>Suppressor of unc-93 protein 10</fullName>
    </alternativeName>
</protein>
<sequence>MRYAVFIFLIVLIDLIYCWNSKRSFFIPDFLGSGDGTPKSKTESVIEERMEYGRMILLVCNKTCAKHRSDIPLWLKEFNQKKGYQEPETITYYYHTYRQAVSFIDTNETDVFPNLIYFIGVKRVVFNGDVNIREDVNDWIASLDQLILLEPRVYEDLNVILSDTSNCSSKYLLLADRPKCPQPSWSIVARIAQDHGIQPVKIGHPLDGLTHVLLYKRMPYLSEASCHLSVLLYENSYSDFGDDINPLVVSDWITTLLPLEEGSCPALFETYWHPIVDELTELQQIFYSAELEISERNKRPAFVLVGLTGGIAVIILAFSIFWGLNGSGFNKD</sequence>
<name>SUP10_CAEEL</name>
<gene>
    <name evidence="8" type="primary">sup-10</name>
    <name type="ORF">R09G11.1</name>
</gene>
<dbReference type="EMBL" id="U43891">
    <property type="protein sequence ID" value="AAB61087.1"/>
    <property type="molecule type" value="mRNA"/>
</dbReference>
<dbReference type="EMBL" id="FO081263">
    <property type="protein sequence ID" value="CCD70295.1"/>
    <property type="molecule type" value="Genomic_DNA"/>
</dbReference>
<dbReference type="PIR" id="T28882">
    <property type="entry name" value="T28882"/>
</dbReference>
<dbReference type="RefSeq" id="NP_510835.1">
    <property type="nucleotide sequence ID" value="NM_078434.7"/>
</dbReference>
<dbReference type="FunCoup" id="Q17374">
    <property type="interactions" value="36"/>
</dbReference>
<dbReference type="STRING" id="6239.R09G11.1.1"/>
<dbReference type="TCDB" id="8.A.119.1.1">
    <property type="family name" value="the potassium channel regulatory protein sup-10 (sup-10) family"/>
</dbReference>
<dbReference type="GlyCosmos" id="Q17374">
    <property type="glycosylation" value="3 sites, No reported glycans"/>
</dbReference>
<dbReference type="iPTMnet" id="Q17374"/>
<dbReference type="PaxDb" id="6239-R09G11.1"/>
<dbReference type="PeptideAtlas" id="Q17374"/>
<dbReference type="EnsemblMetazoa" id="R09G11.1.1">
    <property type="protein sequence ID" value="R09G11.1.1"/>
    <property type="gene ID" value="WBGene00006319"/>
</dbReference>
<dbReference type="GeneID" id="181784"/>
<dbReference type="KEGG" id="cel:CELE_R09G11.1"/>
<dbReference type="UCSC" id="R09G11.1">
    <property type="organism name" value="c. elegans"/>
</dbReference>
<dbReference type="AGR" id="WB:WBGene00006319"/>
<dbReference type="CTD" id="181784"/>
<dbReference type="WormBase" id="R09G11.1">
    <property type="protein sequence ID" value="CE12656"/>
    <property type="gene ID" value="WBGene00006319"/>
    <property type="gene designation" value="sup-10"/>
</dbReference>
<dbReference type="eggNOG" id="ENOG502S7BA">
    <property type="taxonomic scope" value="Eukaryota"/>
</dbReference>
<dbReference type="HOGENOM" id="CLU_912872_0_0_1"/>
<dbReference type="InParanoid" id="Q17374"/>
<dbReference type="OMA" id="ETITYYY"/>
<dbReference type="OrthoDB" id="5818751at2759"/>
<dbReference type="BRENDA" id="1.21.1.1">
    <property type="organism ID" value="1045"/>
</dbReference>
<dbReference type="PRO" id="PR:Q17374"/>
<dbReference type="Proteomes" id="UP000001940">
    <property type="component" value="Chromosome X"/>
</dbReference>
<dbReference type="Bgee" id="WBGene00006319">
    <property type="expression patterns" value="Expressed in larva and 2 other cell types or tissues"/>
</dbReference>
<dbReference type="GO" id="GO:0005886">
    <property type="term" value="C:plasma membrane"/>
    <property type="evidence" value="ECO:0000314"/>
    <property type="project" value="WormBase"/>
</dbReference>
<dbReference type="GO" id="GO:0055120">
    <property type="term" value="C:striated muscle dense body"/>
    <property type="evidence" value="ECO:0000314"/>
    <property type="project" value="WormBase"/>
</dbReference>
<dbReference type="GO" id="GO:0015459">
    <property type="term" value="F:potassium channel regulator activity"/>
    <property type="evidence" value="ECO:0000316"/>
    <property type="project" value="UniProtKB"/>
</dbReference>
<dbReference type="GO" id="GO:0006813">
    <property type="term" value="P:potassium ion transport"/>
    <property type="evidence" value="ECO:0007669"/>
    <property type="project" value="UniProtKB-KW"/>
</dbReference>
<dbReference type="GO" id="GO:0006937">
    <property type="term" value="P:regulation of muscle contraction"/>
    <property type="evidence" value="ECO:0000315"/>
    <property type="project" value="UniProtKB"/>
</dbReference>
<dbReference type="GO" id="GO:0043266">
    <property type="term" value="P:regulation of potassium ion transport"/>
    <property type="evidence" value="ECO:0000316"/>
    <property type="project" value="UniProtKB"/>
</dbReference>
<proteinExistence type="evidence at protein level"/>
<evidence type="ECO:0000255" key="1"/>
<evidence type="ECO:0000269" key="2">
    <source>
    </source>
</evidence>
<evidence type="ECO:0000269" key="3">
    <source>
    </source>
</evidence>
<evidence type="ECO:0000269" key="4">
    <source>
    </source>
</evidence>
<evidence type="ECO:0000303" key="5">
    <source>
    </source>
</evidence>
<evidence type="ECO:0000305" key="6"/>
<evidence type="ECO:0000305" key="7">
    <source>
    </source>
</evidence>
<evidence type="ECO:0000312" key="8">
    <source>
        <dbReference type="EMBL" id="AAB61087.1"/>
    </source>
</evidence>
<comment type="function">
    <text evidence="5">May contribute to coordination of muscle contraction as regulatory subunit of a nonessential potassium channel complex.</text>
</comment>
<comment type="subunit">
    <text evidence="5 7">May form a complex with sup-9 and unc-93 where sup-10 and unc-93 act as regulatory subunits of the two pore potassium channel sup-9. Sup-10 may regulate sup-9 via sup-18.</text>
</comment>
<comment type="subcellular location">
    <subcellularLocation>
        <location evidence="5">Membrane</location>
        <topology evidence="5">Single-pass type I membrane protein</topology>
    </subcellularLocation>
    <text evidence="2 4">In body-wall muscle cells, localizes to dense body-like structure which connect the myofibril lattice to the cell membrane. Colocalizes with sup-18.</text>
</comment>
<comment type="tissue specificity">
    <text evidence="2">Low levels in body-wall muscles, eight vulval muscles, intestinal muscles and anal depressor muscle.</text>
</comment>
<comment type="miscellaneous">
    <text evidence="2">Gain of function uncoordinated rubber band response is phenocopied by exposure to the unc-49 agonist muscimol.</text>
</comment>
<keyword id="KW-0325">Glycoprotein</keyword>
<keyword id="KW-0406">Ion transport</keyword>
<keyword id="KW-0472">Membrane</keyword>
<keyword id="KW-0630">Potassium</keyword>
<keyword id="KW-0633">Potassium transport</keyword>
<keyword id="KW-1185">Reference proteome</keyword>
<keyword id="KW-0732">Signal</keyword>
<keyword id="KW-0812">Transmembrane</keyword>
<keyword id="KW-1133">Transmembrane helix</keyword>
<keyword id="KW-0813">Transport</keyword>
<reference evidence="6 8" key="1">
    <citation type="journal article" date="2003" name="J. Neurosci.">
        <title>sup-9, sup-10, and unc-93 may encode components of a two-pore K+ channel that coordinates muscle contraction in Caenorhabditis elegans.</title>
        <authorList>
            <person name="de la Cruz I.P."/>
            <person name="Levin J.Z."/>
            <person name="Cummins C."/>
            <person name="Anderson P."/>
            <person name="Horvitz H.R."/>
        </authorList>
    </citation>
    <scope>NUCLEOTIDE SEQUENCE [MRNA]</scope>
    <scope>FUNCTION</scope>
    <scope>SUBCELLULAR LOCATION</scope>
    <scope>TISSUE SPECIFICITY</scope>
    <scope>MUTAGENESIS OF GLU-88; GLY-323 AND 322-TRP--ASP-332</scope>
    <source>
        <strain evidence="8">Bristol N2</strain>
    </source>
</reference>
<reference key="2">
    <citation type="journal article" date="1998" name="Science">
        <title>Genome sequence of the nematode C. elegans: a platform for investigating biology.</title>
        <authorList>
            <consortium name="The C. elegans sequencing consortium"/>
        </authorList>
    </citation>
    <scope>NUCLEOTIDE SEQUENCE [LARGE SCALE GENOMIC DNA]</scope>
    <source>
        <strain>Bristol N2</strain>
    </source>
</reference>
<reference key="3">
    <citation type="journal article" date="2007" name="Mol. Cell. Proteomics">
        <title>Proteomics reveals N-linked glycoprotein diversity in Caenorhabditis elegans and suggests an atypical translocation mechanism for integral membrane proteins.</title>
        <authorList>
            <person name="Kaji H."/>
            <person name="Kamiie J."/>
            <person name="Kawakami H."/>
            <person name="Kido K."/>
            <person name="Yamauchi Y."/>
            <person name="Shinkawa T."/>
            <person name="Taoka M."/>
            <person name="Takahashi N."/>
            <person name="Isobe T."/>
        </authorList>
    </citation>
    <scope>GLYCOSYLATION [LARGE SCALE ANALYSIS] AT ASN-61</scope>
    <scope>IDENTIFICATION BY MASS SPECTROMETRY</scope>
    <source>
        <strain>Bristol N2</strain>
    </source>
</reference>
<reference key="4">
    <citation type="journal article" date="2014" name="PLoS Genet.">
        <title>The Caenorhabditis elegans iodotyrosine deiodinase ortholog SUP-18 functions through a conserved channel SC-box to regulate the muscle two-pore domain potassium channel SUP-9.</title>
        <authorList>
            <person name="de la Cruz I.P."/>
            <person name="Ma L."/>
            <person name="Horvitz H.R."/>
        </authorList>
    </citation>
    <scope>SUBUNIT</scope>
    <scope>SUBCELLULAR LOCATION</scope>
</reference>
<feature type="signal peptide" evidence="1">
    <location>
        <begin position="1"/>
        <end position="18"/>
    </location>
</feature>
<feature type="chain" id="PRO_0000022440" description="Putative potassium channel regulatory protein sup-10" evidence="1">
    <location>
        <begin position="19"/>
        <end position="332"/>
    </location>
</feature>
<feature type="topological domain" description="Extracellular" evidence="1">
    <location>
        <begin position="19"/>
        <end position="301"/>
    </location>
</feature>
<feature type="transmembrane region" description="Helical" evidence="1">
    <location>
        <begin position="302"/>
        <end position="322"/>
    </location>
</feature>
<feature type="topological domain" description="Cytoplasmic" evidence="1">
    <location>
        <begin position="323"/>
        <end position="332"/>
    </location>
</feature>
<feature type="glycosylation site" description="N-linked (GlcNAc...) asparagine" evidence="3">
    <location>
        <position position="61"/>
    </location>
</feature>
<feature type="glycosylation site" description="N-linked (GlcNAc...) asparagine" evidence="1">
    <location>
        <position position="107"/>
    </location>
</feature>
<feature type="glycosylation site" description="N-linked (GlcNAc...) asparagine" evidence="1">
    <location>
        <position position="166"/>
    </location>
</feature>
<feature type="mutagenesis site" description="In n619; loss of function." evidence="2">
    <original>E</original>
    <variation>K</variation>
    <location>
        <position position="88"/>
    </location>
</feature>
<feature type="mutagenesis site" description="In n983; gain of function, uncoordinated rubber band response." evidence="2">
    <location>
        <begin position="322"/>
        <end position="332"/>
    </location>
</feature>
<feature type="mutagenesis site" description="In n240; loss of function." evidence="2">
    <original>G</original>
    <variation>R</variation>
    <location>
        <position position="323"/>
    </location>
</feature>
<organism>
    <name type="scientific">Caenorhabditis elegans</name>
    <dbReference type="NCBI Taxonomy" id="6239"/>
    <lineage>
        <taxon>Eukaryota</taxon>
        <taxon>Metazoa</taxon>
        <taxon>Ecdysozoa</taxon>
        <taxon>Nematoda</taxon>
        <taxon>Chromadorea</taxon>
        <taxon>Rhabditida</taxon>
        <taxon>Rhabditina</taxon>
        <taxon>Rhabditomorpha</taxon>
        <taxon>Rhabditoidea</taxon>
        <taxon>Rhabditidae</taxon>
        <taxon>Peloderinae</taxon>
        <taxon>Caenorhabditis</taxon>
    </lineage>
</organism>
<accession>Q17374</accession>
<accession>Q21879</accession>